<comment type="function">
    <text evidence="1">ATP-dependent specificity component of the Clp protease. It directs the protease to specific substrates. Can perform chaperone functions in the absence of ClpP.</text>
</comment>
<comment type="subunit">
    <text evidence="1">Component of the ClpX-ClpP complex. Forms a hexameric ring that, in the presence of ATP, binds to fourteen ClpP subunits assembled into a disk-like structure with a central cavity, resembling the structure of eukaryotic proteasomes.</text>
</comment>
<comment type="similarity">
    <text evidence="1">Belongs to the ClpX chaperone family.</text>
</comment>
<evidence type="ECO:0000255" key="1">
    <source>
        <dbReference type="HAMAP-Rule" id="MF_00175"/>
    </source>
</evidence>
<evidence type="ECO:0000255" key="2">
    <source>
        <dbReference type="PROSITE-ProRule" id="PRU01250"/>
    </source>
</evidence>
<feature type="chain" id="PRO_1000098000" description="ATP-dependent Clp protease ATP-binding subunit ClpX">
    <location>
        <begin position="1"/>
        <end position="423"/>
    </location>
</feature>
<feature type="domain" description="ClpX-type ZB" evidence="2">
    <location>
        <begin position="2"/>
        <end position="56"/>
    </location>
</feature>
<feature type="binding site" evidence="2">
    <location>
        <position position="15"/>
    </location>
    <ligand>
        <name>Zn(2+)</name>
        <dbReference type="ChEBI" id="CHEBI:29105"/>
    </ligand>
</feature>
<feature type="binding site" evidence="2">
    <location>
        <position position="18"/>
    </location>
    <ligand>
        <name>Zn(2+)</name>
        <dbReference type="ChEBI" id="CHEBI:29105"/>
    </ligand>
</feature>
<feature type="binding site" evidence="2">
    <location>
        <position position="37"/>
    </location>
    <ligand>
        <name>Zn(2+)</name>
        <dbReference type="ChEBI" id="CHEBI:29105"/>
    </ligand>
</feature>
<feature type="binding site" evidence="2">
    <location>
        <position position="40"/>
    </location>
    <ligand>
        <name>Zn(2+)</name>
        <dbReference type="ChEBI" id="CHEBI:29105"/>
    </ligand>
</feature>
<feature type="binding site" evidence="1">
    <location>
        <begin position="120"/>
        <end position="127"/>
    </location>
    <ligand>
        <name>ATP</name>
        <dbReference type="ChEBI" id="CHEBI:30616"/>
    </ligand>
</feature>
<sequence>MTDKRKDGSGKLLYCSFCGKSQHEVRKLIAGPSVYICDECVDLCNDIIREEIKEVAPHRERSALPTPHEIRTHLDDYVIGQEQAKKVLAVAVYNHYKRLRNGDTSNGVELGKSNILLIGPTGSGKTLLAETLARLLDVPFTMADATTLTEAGYVGEDVENIIQKLLQKCDYDVQKAQRGIVYIDEIDKISRKSDNPSITRDVSGEGVQQALLKLIEGTVAAVPPQGGRKHPQQEFLQVDTSKILFICGGAFAGLDKVIANRVETGSGIGFGATVKAKSDKASEGELLSQVEPEDLIKFGLIPEFIGRLPVVATLNELSEEALIQILKEPKNALTKQYQALFNLEGVDLEFRDEALDAIARKAMARKTGARGLRSIVEAALLDTMYDLPSMEDVEKVVIDESVIAGQSKPLLIYGKPEAQASGE</sequence>
<organism>
    <name type="scientific">Salmonella schwarzengrund (strain CVM19633)</name>
    <dbReference type="NCBI Taxonomy" id="439843"/>
    <lineage>
        <taxon>Bacteria</taxon>
        <taxon>Pseudomonadati</taxon>
        <taxon>Pseudomonadota</taxon>
        <taxon>Gammaproteobacteria</taxon>
        <taxon>Enterobacterales</taxon>
        <taxon>Enterobacteriaceae</taxon>
        <taxon>Salmonella</taxon>
    </lineage>
</organism>
<accession>B4TMC7</accession>
<protein>
    <recommendedName>
        <fullName evidence="1">ATP-dependent Clp protease ATP-binding subunit ClpX</fullName>
    </recommendedName>
</protein>
<reference key="1">
    <citation type="journal article" date="2011" name="J. Bacteriol.">
        <title>Comparative genomics of 28 Salmonella enterica isolates: evidence for CRISPR-mediated adaptive sublineage evolution.</title>
        <authorList>
            <person name="Fricke W.F."/>
            <person name="Mammel M.K."/>
            <person name="McDermott P.F."/>
            <person name="Tartera C."/>
            <person name="White D.G."/>
            <person name="Leclerc J.E."/>
            <person name="Ravel J."/>
            <person name="Cebula T.A."/>
        </authorList>
    </citation>
    <scope>NUCLEOTIDE SEQUENCE [LARGE SCALE GENOMIC DNA]</scope>
    <source>
        <strain>CVM19633</strain>
    </source>
</reference>
<gene>
    <name evidence="1" type="primary">clpX</name>
    <name type="ordered locus">SeSA_A0508</name>
</gene>
<name>CLPX_SALSV</name>
<dbReference type="EMBL" id="CP001127">
    <property type="protein sequence ID" value="ACF89543.1"/>
    <property type="molecule type" value="Genomic_DNA"/>
</dbReference>
<dbReference type="RefSeq" id="WP_000130314.1">
    <property type="nucleotide sequence ID" value="NC_011094.1"/>
</dbReference>
<dbReference type="SMR" id="B4TMC7"/>
<dbReference type="KEGG" id="sew:SeSA_A0508"/>
<dbReference type="HOGENOM" id="CLU_014218_8_2_6"/>
<dbReference type="Proteomes" id="UP000001865">
    <property type="component" value="Chromosome"/>
</dbReference>
<dbReference type="GO" id="GO:0009376">
    <property type="term" value="C:HslUV protease complex"/>
    <property type="evidence" value="ECO:0007669"/>
    <property type="project" value="TreeGrafter"/>
</dbReference>
<dbReference type="GO" id="GO:0005524">
    <property type="term" value="F:ATP binding"/>
    <property type="evidence" value="ECO:0007669"/>
    <property type="project" value="UniProtKB-UniRule"/>
</dbReference>
<dbReference type="GO" id="GO:0016887">
    <property type="term" value="F:ATP hydrolysis activity"/>
    <property type="evidence" value="ECO:0007669"/>
    <property type="project" value="InterPro"/>
</dbReference>
<dbReference type="GO" id="GO:0140662">
    <property type="term" value="F:ATP-dependent protein folding chaperone"/>
    <property type="evidence" value="ECO:0007669"/>
    <property type="project" value="InterPro"/>
</dbReference>
<dbReference type="GO" id="GO:0046983">
    <property type="term" value="F:protein dimerization activity"/>
    <property type="evidence" value="ECO:0007669"/>
    <property type="project" value="InterPro"/>
</dbReference>
<dbReference type="GO" id="GO:0051082">
    <property type="term" value="F:unfolded protein binding"/>
    <property type="evidence" value="ECO:0007669"/>
    <property type="project" value="UniProtKB-UniRule"/>
</dbReference>
<dbReference type="GO" id="GO:0008270">
    <property type="term" value="F:zinc ion binding"/>
    <property type="evidence" value="ECO:0007669"/>
    <property type="project" value="InterPro"/>
</dbReference>
<dbReference type="GO" id="GO:0051301">
    <property type="term" value="P:cell division"/>
    <property type="evidence" value="ECO:0007669"/>
    <property type="project" value="TreeGrafter"/>
</dbReference>
<dbReference type="GO" id="GO:0051603">
    <property type="term" value="P:proteolysis involved in protein catabolic process"/>
    <property type="evidence" value="ECO:0007669"/>
    <property type="project" value="TreeGrafter"/>
</dbReference>
<dbReference type="CDD" id="cd19497">
    <property type="entry name" value="RecA-like_ClpX"/>
    <property type="match status" value="1"/>
</dbReference>
<dbReference type="FunFam" id="1.10.8.60:FF:000002">
    <property type="entry name" value="ATP-dependent Clp protease ATP-binding subunit ClpX"/>
    <property type="match status" value="1"/>
</dbReference>
<dbReference type="FunFam" id="3.40.50.300:FF:000005">
    <property type="entry name" value="ATP-dependent Clp protease ATP-binding subunit ClpX"/>
    <property type="match status" value="1"/>
</dbReference>
<dbReference type="Gene3D" id="1.10.8.60">
    <property type="match status" value="1"/>
</dbReference>
<dbReference type="Gene3D" id="6.20.220.10">
    <property type="entry name" value="ClpX chaperone, C4-type zinc finger domain"/>
    <property type="match status" value="1"/>
</dbReference>
<dbReference type="Gene3D" id="3.40.50.300">
    <property type="entry name" value="P-loop containing nucleotide triphosphate hydrolases"/>
    <property type="match status" value="1"/>
</dbReference>
<dbReference type="HAMAP" id="MF_00175">
    <property type="entry name" value="ClpX"/>
    <property type="match status" value="1"/>
</dbReference>
<dbReference type="InterPro" id="IPR003593">
    <property type="entry name" value="AAA+_ATPase"/>
</dbReference>
<dbReference type="InterPro" id="IPR050052">
    <property type="entry name" value="ATP-dep_Clp_protease_ClpX"/>
</dbReference>
<dbReference type="InterPro" id="IPR003959">
    <property type="entry name" value="ATPase_AAA_core"/>
</dbReference>
<dbReference type="InterPro" id="IPR019489">
    <property type="entry name" value="Clp_ATPase_C"/>
</dbReference>
<dbReference type="InterPro" id="IPR004487">
    <property type="entry name" value="Clp_protease_ATP-bd_su_ClpX"/>
</dbReference>
<dbReference type="InterPro" id="IPR046425">
    <property type="entry name" value="ClpX_bact"/>
</dbReference>
<dbReference type="InterPro" id="IPR027417">
    <property type="entry name" value="P-loop_NTPase"/>
</dbReference>
<dbReference type="InterPro" id="IPR010603">
    <property type="entry name" value="Znf_CppX_C4"/>
</dbReference>
<dbReference type="InterPro" id="IPR038366">
    <property type="entry name" value="Znf_CppX_C4_sf"/>
</dbReference>
<dbReference type="NCBIfam" id="TIGR00382">
    <property type="entry name" value="clpX"/>
    <property type="match status" value="1"/>
</dbReference>
<dbReference type="NCBIfam" id="NF003745">
    <property type="entry name" value="PRK05342.1"/>
    <property type="match status" value="1"/>
</dbReference>
<dbReference type="PANTHER" id="PTHR48102:SF7">
    <property type="entry name" value="ATP-DEPENDENT CLP PROTEASE ATP-BINDING SUBUNIT CLPX-LIKE, MITOCHONDRIAL"/>
    <property type="match status" value="1"/>
</dbReference>
<dbReference type="PANTHER" id="PTHR48102">
    <property type="entry name" value="ATP-DEPENDENT CLP PROTEASE ATP-BINDING SUBUNIT CLPX-LIKE, MITOCHONDRIAL-RELATED"/>
    <property type="match status" value="1"/>
</dbReference>
<dbReference type="Pfam" id="PF07724">
    <property type="entry name" value="AAA_2"/>
    <property type="match status" value="1"/>
</dbReference>
<dbReference type="Pfam" id="PF10431">
    <property type="entry name" value="ClpB_D2-small"/>
    <property type="match status" value="1"/>
</dbReference>
<dbReference type="Pfam" id="PF06689">
    <property type="entry name" value="zf-C4_ClpX"/>
    <property type="match status" value="1"/>
</dbReference>
<dbReference type="SMART" id="SM00382">
    <property type="entry name" value="AAA"/>
    <property type="match status" value="1"/>
</dbReference>
<dbReference type="SMART" id="SM01086">
    <property type="entry name" value="ClpB_D2-small"/>
    <property type="match status" value="1"/>
</dbReference>
<dbReference type="SMART" id="SM00994">
    <property type="entry name" value="zf-C4_ClpX"/>
    <property type="match status" value="1"/>
</dbReference>
<dbReference type="SUPFAM" id="SSF57716">
    <property type="entry name" value="Glucocorticoid receptor-like (DNA-binding domain)"/>
    <property type="match status" value="1"/>
</dbReference>
<dbReference type="SUPFAM" id="SSF52540">
    <property type="entry name" value="P-loop containing nucleoside triphosphate hydrolases"/>
    <property type="match status" value="1"/>
</dbReference>
<dbReference type="PROSITE" id="PS51902">
    <property type="entry name" value="CLPX_ZB"/>
    <property type="match status" value="1"/>
</dbReference>
<keyword id="KW-0067">ATP-binding</keyword>
<keyword id="KW-0143">Chaperone</keyword>
<keyword id="KW-0479">Metal-binding</keyword>
<keyword id="KW-0547">Nucleotide-binding</keyword>
<keyword id="KW-0862">Zinc</keyword>
<proteinExistence type="inferred from homology"/>